<protein>
    <recommendedName>
        <fullName evidence="4">Ferroxidase HEPHL1</fullName>
        <ecNumber evidence="3">1.16.3.1</ecNumber>
    </recommendedName>
    <alternativeName>
        <fullName>Hephaestin-like protein 1</fullName>
    </alternativeName>
</protein>
<gene>
    <name type="primary">HEPHL1</name>
</gene>
<sequence>MPRKQPAGCIFLLTFLGLSGLVGTVTRTYYIGIVEEYWNYVPQGKNVITGKSFTEDKLATLFLERGPNRIGSIYKKAVYRRFTDGTYSIEIPKPPWLGFLGPILRAEVGDVIVIHLKNFASRPYSLHPHGVFYNKDSEGALYPDGTSGRNKNDDMVPPGKNYTYVWPVREEYAPTPADANCLTWVYHSHIDAPKDICSGLIGPLLVCKEGILNRYSGTRNDVDREFVIMFTLVDENQSWYLNENIKHFCTNPDSVDKKDAVFQRSNKMHALNGYLFGNFPEPDMCVGESVSWHLFGMGNEIDIHSIYFYGNTFISRGHRTDVVNLFPATFLTTEMIAENPGKWMITCQVSDHLQAGMLGQYNVDNCKSDIFYPKMKGQQRRYFIAAEKILWDYAPQGYNKFSGLPLNASGSDSDLYFTQGDNRIGGKYWKVRYTEFVDATFTKRKRLSAEEAHLGILGPVIKAEVGDTLLVTFANKADKVYSILPHGVIYDKASDAAPNLDGFVKPGAHVKPGETFTYKWTVPESVSPTAGDPPCLTYLYFSAVDPIKDTSSGLVGPLLVCKKGVLNADGTQKGIDKEFYLLFTVFDENLSRYFDENIQKFIWHPFSIDKEDKEFVKSNRMHAVNGYMYGNQPGLNMCKRDRVSWHLIGLGTDTDMHGIVFQGNTIHLRGTHRDSLALFPHMATTAFMQPDHAGIFRVFCATMPHLSRGMGQIYEVSSCDNRDPSEQRYGMIRTFYIAAEEVEWDYAPNKNWEFEKQHVDARGERHGDIFMNRTENWIGSQYKKVVYREYTDGEFVEIKARPPREEHLELLGPMIHAEVGNTVLIIFKNKASRPYSISAQGVEEMDSGKQFQVPMTKPGEVKTYRWNIPKRSGPGPSDPNCIPWVYYSTVNFVKDTYSGLMGPLITCRKGVLNEKGRRSDVDYEFALLFLVFNENESWYLDDNIKKYLNKDPRDFKRTDDFEESNRMHAINGKIFGNLHGLIMNEDTMTNWYLLGIGSEVDIHTIHYHAESFLFKIDKSYREDVYDLFPGTFQTIELFADHPGTWLLHCHVSDHIHAGMETTYTVLRNIDNRIPYSTTSPGVASHPATVPSNERPGKEQLYFFGKNLGPTGAKAALVILFIIGLLLLITTVILSLRLCSAMKQTDYQQVQSCALPTDAL</sequence>
<dbReference type="EC" id="1.16.3.1" evidence="3"/>
<dbReference type="EMBL" id="AP002795">
    <property type="status" value="NOT_ANNOTATED_CDS"/>
    <property type="molecule type" value="Genomic_DNA"/>
</dbReference>
<dbReference type="EMBL" id="AB231719">
    <property type="protein sequence ID" value="BAE46880.1"/>
    <property type="molecule type" value="mRNA"/>
</dbReference>
<dbReference type="EMBL" id="BX641008">
    <property type="protein sequence ID" value="CAE46009.1"/>
    <property type="molecule type" value="mRNA"/>
</dbReference>
<dbReference type="CCDS" id="CCDS44710.1"/>
<dbReference type="RefSeq" id="NP_001092142.1">
    <property type="nucleotide sequence ID" value="NM_001098672.2"/>
</dbReference>
<dbReference type="SMR" id="Q6MZM0"/>
<dbReference type="BioGRID" id="131121">
    <property type="interactions" value="114"/>
</dbReference>
<dbReference type="FunCoup" id="Q6MZM0">
    <property type="interactions" value="641"/>
</dbReference>
<dbReference type="IntAct" id="Q6MZM0">
    <property type="interactions" value="69"/>
</dbReference>
<dbReference type="STRING" id="9606.ENSP00000313699"/>
<dbReference type="DrugBank" id="DB09130">
    <property type="generic name" value="Copper"/>
</dbReference>
<dbReference type="TCDB" id="8.A.105.1.3">
    <property type="family name" value="the multi-copper-containing ferroxidase (mcfo) family"/>
</dbReference>
<dbReference type="GlyCosmos" id="Q6MZM0">
    <property type="glycosylation" value="6 sites, No reported glycans"/>
</dbReference>
<dbReference type="GlyGen" id="Q6MZM0">
    <property type="glycosylation" value="8 sites"/>
</dbReference>
<dbReference type="iPTMnet" id="Q6MZM0"/>
<dbReference type="PhosphoSitePlus" id="Q6MZM0"/>
<dbReference type="SwissPalm" id="Q6MZM0"/>
<dbReference type="BioMuta" id="HEPHL1"/>
<dbReference type="DMDM" id="205785679"/>
<dbReference type="MassIVE" id="Q6MZM0"/>
<dbReference type="PaxDb" id="9606-ENSP00000313699"/>
<dbReference type="PeptideAtlas" id="Q6MZM0"/>
<dbReference type="ProteomicsDB" id="66573"/>
<dbReference type="Pumba" id="Q6MZM0"/>
<dbReference type="Antibodypedia" id="31604">
    <property type="antibodies" value="58 antibodies from 12 providers"/>
</dbReference>
<dbReference type="DNASU" id="341208"/>
<dbReference type="Ensembl" id="ENST00000315765.10">
    <property type="protein sequence ID" value="ENSP00000313699.9"/>
    <property type="gene ID" value="ENSG00000181333.12"/>
</dbReference>
<dbReference type="GeneID" id="341208"/>
<dbReference type="KEGG" id="hsa:341208"/>
<dbReference type="MANE-Select" id="ENST00000315765.10">
    <property type="protein sequence ID" value="ENSP00000313699.9"/>
    <property type="RefSeq nucleotide sequence ID" value="NM_001098672.2"/>
    <property type="RefSeq protein sequence ID" value="NP_001092142.1"/>
</dbReference>
<dbReference type="UCSC" id="uc001pep.3">
    <property type="organism name" value="human"/>
</dbReference>
<dbReference type="AGR" id="HGNC:30477"/>
<dbReference type="CTD" id="341208"/>
<dbReference type="DisGeNET" id="341208"/>
<dbReference type="GeneCards" id="HEPHL1"/>
<dbReference type="HGNC" id="HGNC:30477">
    <property type="gene designation" value="HEPHL1"/>
</dbReference>
<dbReference type="HPA" id="ENSG00000181333">
    <property type="expression patterns" value="Group enriched (esophagus, lymphoid tissue, skin, vagina)"/>
</dbReference>
<dbReference type="MalaCards" id="HEPHL1"/>
<dbReference type="MIM" id="261990">
    <property type="type" value="phenotype"/>
</dbReference>
<dbReference type="MIM" id="618455">
    <property type="type" value="gene"/>
</dbReference>
<dbReference type="neXtProt" id="NX_Q6MZM0"/>
<dbReference type="OpenTargets" id="ENSG00000181333"/>
<dbReference type="PharmGKB" id="PA134873144"/>
<dbReference type="VEuPathDB" id="HostDB:ENSG00000181333"/>
<dbReference type="eggNOG" id="KOG1263">
    <property type="taxonomic scope" value="Eukaryota"/>
</dbReference>
<dbReference type="GeneTree" id="ENSGT00940000157994"/>
<dbReference type="HOGENOM" id="CLU_005569_0_0_1"/>
<dbReference type="InParanoid" id="Q6MZM0"/>
<dbReference type="OMA" id="PEPDMCV"/>
<dbReference type="OrthoDB" id="2121828at2759"/>
<dbReference type="PAN-GO" id="Q6MZM0">
    <property type="GO annotations" value="4 GO annotations based on evolutionary models"/>
</dbReference>
<dbReference type="PhylomeDB" id="Q6MZM0"/>
<dbReference type="TreeFam" id="TF329807"/>
<dbReference type="PathwayCommons" id="Q6MZM0"/>
<dbReference type="SignaLink" id="Q6MZM0"/>
<dbReference type="BioGRID-ORCS" id="341208">
    <property type="hits" value="12 hits in 1145 CRISPR screens"/>
</dbReference>
<dbReference type="CD-CODE" id="91857CE7">
    <property type="entry name" value="Nucleolus"/>
</dbReference>
<dbReference type="ChiTaRS" id="HEPHL1">
    <property type="organism name" value="human"/>
</dbReference>
<dbReference type="GenomeRNAi" id="341208"/>
<dbReference type="Pharos" id="Q6MZM0">
    <property type="development level" value="Tbio"/>
</dbReference>
<dbReference type="PRO" id="PR:Q6MZM0"/>
<dbReference type="Proteomes" id="UP000005640">
    <property type="component" value="Chromosome 11"/>
</dbReference>
<dbReference type="RNAct" id="Q6MZM0">
    <property type="molecule type" value="protein"/>
</dbReference>
<dbReference type="Bgee" id="ENSG00000181333">
    <property type="expression patterns" value="Expressed in male germ line stem cell (sensu Vertebrata) in testis and 44 other cell types or tissues"/>
</dbReference>
<dbReference type="GO" id="GO:0005886">
    <property type="term" value="C:plasma membrane"/>
    <property type="evidence" value="ECO:0000318"/>
    <property type="project" value="GO_Central"/>
</dbReference>
<dbReference type="GO" id="GO:0005507">
    <property type="term" value="F:copper ion binding"/>
    <property type="evidence" value="ECO:0007669"/>
    <property type="project" value="InterPro"/>
</dbReference>
<dbReference type="GO" id="GO:0004322">
    <property type="term" value="F:ferroxidase activity"/>
    <property type="evidence" value="ECO:0000314"/>
    <property type="project" value="UniProtKB"/>
</dbReference>
<dbReference type="GO" id="GO:0006825">
    <property type="term" value="P:copper ion transport"/>
    <property type="evidence" value="ECO:0007669"/>
    <property type="project" value="UniProtKB-KW"/>
</dbReference>
<dbReference type="GO" id="GO:0006879">
    <property type="term" value="P:intracellular iron ion homeostasis"/>
    <property type="evidence" value="ECO:0000315"/>
    <property type="project" value="UniProtKB"/>
</dbReference>
<dbReference type="CDD" id="cd04222">
    <property type="entry name" value="CuRO_1_ceruloplasmin"/>
    <property type="match status" value="1"/>
</dbReference>
<dbReference type="CDD" id="cd11021">
    <property type="entry name" value="CuRO_2_ceruloplasmin"/>
    <property type="match status" value="1"/>
</dbReference>
<dbReference type="CDD" id="cd04224">
    <property type="entry name" value="CuRO_3_ceruloplasmin"/>
    <property type="match status" value="1"/>
</dbReference>
<dbReference type="CDD" id="cd11022">
    <property type="entry name" value="CuRO_4_ceruloplasmin"/>
    <property type="match status" value="1"/>
</dbReference>
<dbReference type="FunFam" id="2.60.40.420:FF:000002">
    <property type="entry name" value="Hephaestin like 1"/>
    <property type="match status" value="3"/>
</dbReference>
<dbReference type="Gene3D" id="2.60.40.420">
    <property type="entry name" value="Cupredoxins - blue copper proteins"/>
    <property type="match status" value="3"/>
</dbReference>
<dbReference type="InterPro" id="IPR011707">
    <property type="entry name" value="Cu-oxidase-like_N"/>
</dbReference>
<dbReference type="InterPro" id="IPR011706">
    <property type="entry name" value="Cu-oxidase_C"/>
</dbReference>
<dbReference type="InterPro" id="IPR045087">
    <property type="entry name" value="Cu-oxidase_fam"/>
</dbReference>
<dbReference type="InterPro" id="IPR033138">
    <property type="entry name" value="Cu_oxidase_CS"/>
</dbReference>
<dbReference type="InterPro" id="IPR002355">
    <property type="entry name" value="Cu_oxidase_Cu_BS"/>
</dbReference>
<dbReference type="InterPro" id="IPR008972">
    <property type="entry name" value="Cupredoxin"/>
</dbReference>
<dbReference type="PANTHER" id="PTHR11709:SF233">
    <property type="entry name" value="FERROXIDASE HEPHL1"/>
    <property type="match status" value="1"/>
</dbReference>
<dbReference type="PANTHER" id="PTHR11709">
    <property type="entry name" value="MULTI-COPPER OXIDASE"/>
    <property type="match status" value="1"/>
</dbReference>
<dbReference type="Pfam" id="PF07731">
    <property type="entry name" value="Cu-oxidase_2"/>
    <property type="match status" value="2"/>
</dbReference>
<dbReference type="Pfam" id="PF07732">
    <property type="entry name" value="Cu-oxidase_3"/>
    <property type="match status" value="3"/>
</dbReference>
<dbReference type="SUPFAM" id="SSF49503">
    <property type="entry name" value="Cupredoxins"/>
    <property type="match status" value="6"/>
</dbReference>
<dbReference type="PROSITE" id="PS00079">
    <property type="entry name" value="MULTICOPPER_OXIDASE1"/>
    <property type="match status" value="3"/>
</dbReference>
<dbReference type="PROSITE" id="PS00080">
    <property type="entry name" value="MULTICOPPER_OXIDASE2"/>
    <property type="match status" value="1"/>
</dbReference>
<proteinExistence type="evidence at protein level"/>
<feature type="signal peptide" evidence="2">
    <location>
        <begin position="1"/>
        <end position="24"/>
    </location>
</feature>
<feature type="chain" id="PRO_0000346771" description="Ferroxidase HEPHL1">
    <location>
        <begin position="25"/>
        <end position="1159"/>
    </location>
</feature>
<feature type="topological domain" description="Extracellular" evidence="2">
    <location>
        <begin position="25"/>
        <end position="1114"/>
    </location>
</feature>
<feature type="transmembrane region" description="Helical" evidence="2">
    <location>
        <begin position="1115"/>
        <end position="1135"/>
    </location>
</feature>
<feature type="topological domain" description="Cytoplasmic" evidence="2">
    <location>
        <begin position="1136"/>
        <end position="1159"/>
    </location>
</feature>
<feature type="domain" description="Plastocyanin-like 1">
    <location>
        <begin position="25"/>
        <end position="207"/>
    </location>
</feature>
<feature type="domain" description="Plastocyanin-like 2">
    <location>
        <begin position="218"/>
        <end position="366"/>
    </location>
</feature>
<feature type="domain" description="Plastocyanin-like 3">
    <location>
        <begin position="379"/>
        <end position="561"/>
    </location>
</feature>
<feature type="domain" description="Plastocyanin-like 4">
    <location>
        <begin position="571"/>
        <end position="719"/>
    </location>
</feature>
<feature type="domain" description="Plastocyanin-like 5">
    <location>
        <begin position="731"/>
        <end position="907"/>
    </location>
</feature>
<feature type="domain" description="Plastocyanin-like 6">
    <location>
        <begin position="915"/>
        <end position="1092"/>
    </location>
</feature>
<feature type="binding site" description="type 2 copper site" evidence="1">
    <location>
        <position position="127"/>
    </location>
    <ligand>
        <name>Cu cation</name>
        <dbReference type="ChEBI" id="CHEBI:23378"/>
        <label>1</label>
    </ligand>
</feature>
<feature type="binding site" description="type 3 copper site" evidence="1">
    <location>
        <position position="129"/>
    </location>
    <ligand>
        <name>Cu cation</name>
        <dbReference type="ChEBI" id="CHEBI:23378"/>
        <label>2</label>
    </ligand>
</feature>
<feature type="binding site" description="type 3 copper site" evidence="1">
    <location>
        <position position="187"/>
    </location>
    <ligand>
        <name>Cu cation</name>
        <dbReference type="ChEBI" id="CHEBI:23378"/>
        <label>2</label>
    </ligand>
</feature>
<feature type="binding site" description="type 3 copper site" evidence="1">
    <location>
        <position position="189"/>
    </location>
    <ligand>
        <name>Cu cation</name>
        <dbReference type="ChEBI" id="CHEBI:23378"/>
        <label>3</label>
    </ligand>
</feature>
<feature type="binding site" description="type 1 copper site" evidence="1">
    <location>
        <position position="304"/>
    </location>
    <ligand>
        <name>Cu cation</name>
        <dbReference type="ChEBI" id="CHEBI:23378"/>
        <label>4</label>
    </ligand>
</feature>
<feature type="binding site" description="type 1 copper site" evidence="1">
    <location>
        <position position="347"/>
    </location>
    <ligand>
        <name>Cu cation</name>
        <dbReference type="ChEBI" id="CHEBI:23378"/>
        <label>4</label>
    </ligand>
</feature>
<feature type="binding site" description="type 1 copper site" evidence="1">
    <location>
        <position position="352"/>
    </location>
    <ligand>
        <name>Cu cation</name>
        <dbReference type="ChEBI" id="CHEBI:23378"/>
        <label>4</label>
    </ligand>
</feature>
<feature type="binding site" description="type 1 copper site" evidence="1">
    <location>
        <position position="657"/>
    </location>
    <ligand>
        <name>Cu cation</name>
        <dbReference type="ChEBI" id="CHEBI:23378"/>
        <label>5</label>
    </ligand>
</feature>
<feature type="binding site" description="type 1 copper site" evidence="1">
    <location>
        <position position="700"/>
    </location>
    <ligand>
        <name>Cu cation</name>
        <dbReference type="ChEBI" id="CHEBI:23378"/>
        <label>5</label>
    </ligand>
</feature>
<feature type="binding site" description="type 1 copper site" evidence="1">
    <location>
        <position position="705"/>
    </location>
    <ligand>
        <name>Cu cation</name>
        <dbReference type="ChEBI" id="CHEBI:23378"/>
        <label>5</label>
    </ligand>
</feature>
<feature type="binding site" description="type 1 copper site" evidence="1">
    <location>
        <position position="710"/>
    </location>
    <ligand>
        <name>Cu cation</name>
        <dbReference type="ChEBI" id="CHEBI:23378"/>
        <label>5</label>
    </ligand>
</feature>
<feature type="binding site" description="type 1 copper site" evidence="1">
    <location>
        <position position="1003"/>
    </location>
    <ligand>
        <name>Cu cation</name>
        <dbReference type="ChEBI" id="CHEBI:23378"/>
        <label>6</label>
    </ligand>
</feature>
<feature type="binding site" description="type 2 copper site" evidence="1">
    <location>
        <position position="1006"/>
    </location>
    <ligand>
        <name>Cu cation</name>
        <dbReference type="ChEBI" id="CHEBI:23378"/>
        <label>1</label>
    </ligand>
</feature>
<feature type="binding site" description="type 3 copper site" evidence="1">
    <location>
        <position position="1008"/>
    </location>
    <ligand>
        <name>Cu cation</name>
        <dbReference type="ChEBI" id="CHEBI:23378"/>
        <label>3</label>
    </ligand>
</feature>
<feature type="binding site" description="type 3 copper site" evidence="1">
    <location>
        <position position="1048"/>
    </location>
    <ligand>
        <name>Cu cation</name>
        <dbReference type="ChEBI" id="CHEBI:23378"/>
        <label>3</label>
    </ligand>
</feature>
<feature type="binding site" description="type 1 copper site" evidence="1">
    <location>
        <position position="1049"/>
    </location>
    <ligand>
        <name>Cu cation</name>
        <dbReference type="ChEBI" id="CHEBI:23378"/>
        <label>6</label>
    </ligand>
</feature>
<feature type="binding site" description="type 3 copper site" evidence="1">
    <location>
        <position position="1050"/>
    </location>
    <ligand>
        <name>Cu cation</name>
        <dbReference type="ChEBI" id="CHEBI:23378"/>
        <label>2</label>
    </ligand>
</feature>
<feature type="binding site" description="type 1 copper site" evidence="1">
    <location>
        <position position="1054"/>
    </location>
    <ligand>
        <name>Cu cation</name>
        <dbReference type="ChEBI" id="CHEBI:23378"/>
        <label>6</label>
    </ligand>
</feature>
<feature type="binding site" description="type 1 copper site" evidence="1">
    <location>
        <position position="1059"/>
    </location>
    <ligand>
        <name>Cu cation</name>
        <dbReference type="ChEBI" id="CHEBI:23378"/>
        <label>6</label>
    </ligand>
</feature>
<feature type="glycosylation site" description="N-linked (GlcNAc...) asparagine" evidence="3">
    <location>
        <position position="161"/>
    </location>
</feature>
<feature type="glycosylation site" description="N-linked (GlcNAc...) asparagine" evidence="2">
    <location>
        <position position="236"/>
    </location>
</feature>
<feature type="glycosylation site" description="N-linked (GlcNAc...) asparagine" evidence="3">
    <location>
        <position position="407"/>
    </location>
</feature>
<feature type="glycosylation site" description="N-linked (GlcNAc...) asparagine" evidence="2">
    <location>
        <position position="589"/>
    </location>
</feature>
<feature type="glycosylation site" description="N-linked (GlcNAc...) asparagine" evidence="3">
    <location>
        <position position="772"/>
    </location>
</feature>
<feature type="glycosylation site" description="N-linked (GlcNAc...) asparagine" evidence="2">
    <location>
        <position position="935"/>
    </location>
</feature>
<feature type="disulfide bond" evidence="2">
    <location>
        <begin position="181"/>
        <end position="207"/>
    </location>
</feature>
<feature type="disulfide bond" evidence="2">
    <location>
        <begin position="285"/>
        <end position="366"/>
    </location>
</feature>
<feature type="disulfide bond" evidence="2">
    <location>
        <begin position="535"/>
        <end position="561"/>
    </location>
</feature>
<feature type="disulfide bond" evidence="2">
    <location>
        <begin position="638"/>
        <end position="719"/>
    </location>
</feature>
<feature type="disulfide bond" evidence="2">
    <location>
        <begin position="881"/>
        <end position="907"/>
    </location>
</feature>
<feature type="sequence variant" id="VAR_045903" description="In dbSNP:rs1945783.">
    <original>N</original>
    <variation>D</variation>
    <location>
        <position position="251"/>
    </location>
</feature>
<feature type="sequence variant" id="VAR_082699" description="In HJDD; due to a nucleotide substitution that affects a canonical splice site; patient cells contain transcripts lacking exon 5 and corresponding to protein variant 271-L--A-355 del but also normally spliced transcripts corresponding to protein variant T-355; loss of ferroxidase activity." evidence="3">
    <location>
        <begin position="271"/>
        <end position="355"/>
    </location>
</feature>
<feature type="sequence variant" id="VAR_082700" description="In HJDD; due to a nucleotide substitution that affects a canonical splice site; patient cells contain normally spliced transcripts corresponding to protein variant T-355 but also transcripts lacking exon 5 and corresponding to protein variant 271-L--A-355 del; dbSNP:rs774463623." evidence="3">
    <original>A</original>
    <variation>T</variation>
    <location>
        <position position="355"/>
    </location>
</feature>
<feature type="sequence variant" id="VAR_045904" description="In dbSNP:rs12291622.">
    <original>R</original>
    <variation>C</variation>
    <location>
        <position position="381"/>
    </location>
</feature>
<feature type="sequence variant" id="VAR_082701" description="In HJDD; loss of ferroxidase activity; dbSNP:rs199856193." evidence="3">
    <original>M</original>
    <variation>T</variation>
    <location>
        <position position="1059"/>
    </location>
</feature>
<feature type="sequence conflict" description="In Ref. 2; BAE46880." evidence="4" ref="2">
    <original>G</original>
    <variation>A</variation>
    <location>
        <position position="553"/>
    </location>
</feature>
<feature type="sequence conflict" description="In Ref. 3; CAE46009." evidence="4" ref="3">
    <original>R</original>
    <variation>G</variation>
    <location>
        <position position="697"/>
    </location>
</feature>
<evidence type="ECO:0000250" key="1"/>
<evidence type="ECO:0000255" key="2"/>
<evidence type="ECO:0000269" key="3">
    <source>
    </source>
</evidence>
<evidence type="ECO:0000305" key="4"/>
<keyword id="KW-0186">Copper</keyword>
<keyword id="KW-0187">Copper transport</keyword>
<keyword id="KW-0225">Disease variant</keyword>
<keyword id="KW-1015">Disulfide bond</keyword>
<keyword id="KW-0325">Glycoprotein</keyword>
<keyword id="KW-0406">Ion transport</keyword>
<keyword id="KW-0472">Membrane</keyword>
<keyword id="KW-0479">Metal-binding</keyword>
<keyword id="KW-0560">Oxidoreductase</keyword>
<keyword id="KW-1267">Proteomics identification</keyword>
<keyword id="KW-1185">Reference proteome</keyword>
<keyword id="KW-0677">Repeat</keyword>
<keyword id="KW-0732">Signal</keyword>
<keyword id="KW-0812">Transmembrane</keyword>
<keyword id="KW-1133">Transmembrane helix</keyword>
<keyword id="KW-0813">Transport</keyword>
<accession>Q6MZM0</accession>
<accession>Q3C1W7</accession>
<reference key="1">
    <citation type="journal article" date="2006" name="Nature">
        <title>Human chromosome 11 DNA sequence and analysis including novel gene identification.</title>
        <authorList>
            <person name="Taylor T.D."/>
            <person name="Noguchi H."/>
            <person name="Totoki Y."/>
            <person name="Toyoda A."/>
            <person name="Kuroki Y."/>
            <person name="Dewar K."/>
            <person name="Lloyd C."/>
            <person name="Itoh T."/>
            <person name="Takeda T."/>
            <person name="Kim D.-W."/>
            <person name="She X."/>
            <person name="Barlow K.F."/>
            <person name="Bloom T."/>
            <person name="Bruford E."/>
            <person name="Chang J.L."/>
            <person name="Cuomo C.A."/>
            <person name="Eichler E."/>
            <person name="FitzGerald M.G."/>
            <person name="Jaffe D.B."/>
            <person name="LaButti K."/>
            <person name="Nicol R."/>
            <person name="Park H.-S."/>
            <person name="Seaman C."/>
            <person name="Sougnez C."/>
            <person name="Yang X."/>
            <person name="Zimmer A.R."/>
            <person name="Zody M.C."/>
            <person name="Birren B.W."/>
            <person name="Nusbaum C."/>
            <person name="Fujiyama A."/>
            <person name="Hattori M."/>
            <person name="Rogers J."/>
            <person name="Lander E.S."/>
            <person name="Sakaki Y."/>
        </authorList>
    </citation>
    <scope>NUCLEOTIDE SEQUENCE [LARGE SCALE GENOMIC DNA]</scope>
</reference>
<reference key="2">
    <citation type="submission" date="2005-08" db="EMBL/GenBank/DDBJ databases">
        <authorList>
            <person name="Totoki Y."/>
            <person name="Yada T."/>
            <person name="Sakaki Y."/>
            <person name="Takeda T."/>
        </authorList>
    </citation>
    <scope>NUCLEOTIDE SEQUENCE [LARGE SCALE MRNA] OF 469-559</scope>
</reference>
<reference key="3">
    <citation type="journal article" date="2007" name="BMC Genomics">
        <title>The full-ORF clone resource of the German cDNA consortium.</title>
        <authorList>
            <person name="Bechtel S."/>
            <person name="Rosenfelder H."/>
            <person name="Duda A."/>
            <person name="Schmidt C.P."/>
            <person name="Ernst U."/>
            <person name="Wellenreuther R."/>
            <person name="Mehrle A."/>
            <person name="Schuster C."/>
            <person name="Bahr A."/>
            <person name="Bloecker H."/>
            <person name="Heubner D."/>
            <person name="Hoerlein A."/>
            <person name="Michel G."/>
            <person name="Wedler H."/>
            <person name="Koehrer K."/>
            <person name="Ottenwaelder B."/>
            <person name="Poustka A."/>
            <person name="Wiemann S."/>
            <person name="Schupp I."/>
        </authorList>
    </citation>
    <scope>NUCLEOTIDE SEQUENCE [LARGE SCALE MRNA] OF 697-1159</scope>
    <source>
        <tissue>Esophageal carcinoma</tissue>
    </source>
</reference>
<reference key="4">
    <citation type="journal article" date="2019" name="PLoS Genet.">
        <title>Biallelic HEPHL1 variants impair ferroxidase activity and cause an abnormal hair phenotype.</title>
        <authorList>
            <person name="Sharma P."/>
            <person name="Reichert M."/>
            <person name="Lu Y."/>
            <person name="Markello T.C."/>
            <person name="Adams D.R."/>
            <person name="Steinbach P.J."/>
            <person name="Fuqua B.K."/>
            <person name="Parisi X."/>
            <person name="Kaler S.G."/>
            <person name="Vulpe C.D."/>
            <person name="Anderson G.J."/>
            <person name="Gahl W.A."/>
            <person name="Malicdan M.C.V."/>
        </authorList>
    </citation>
    <scope>FUNCTION</scope>
    <scope>CATALYTIC ACTIVITY</scope>
    <scope>COFACTOR</scope>
    <scope>GLYCOSYLATION AT ASN-161; ASN-407 AND ASN-772</scope>
    <scope>INVOLVEMENT IN HJDD</scope>
    <scope>VARIANTS HJDD 271-LEU--ALA-355 DEL; THR-355 AND THR-1059</scope>
    <scope>CHARACTERIZATION OF VARIANTS HJDD 271-LEU--ALA-355 DEL AND THR-1059</scope>
</reference>
<name>HPHL1_HUMAN</name>
<organism>
    <name type="scientific">Homo sapiens</name>
    <name type="common">Human</name>
    <dbReference type="NCBI Taxonomy" id="9606"/>
    <lineage>
        <taxon>Eukaryota</taxon>
        <taxon>Metazoa</taxon>
        <taxon>Chordata</taxon>
        <taxon>Craniata</taxon>
        <taxon>Vertebrata</taxon>
        <taxon>Euteleostomi</taxon>
        <taxon>Mammalia</taxon>
        <taxon>Eutheria</taxon>
        <taxon>Euarchontoglires</taxon>
        <taxon>Primates</taxon>
        <taxon>Haplorrhini</taxon>
        <taxon>Catarrhini</taxon>
        <taxon>Hominidae</taxon>
        <taxon>Homo</taxon>
    </lineage>
</organism>
<comment type="function">
    <text evidence="3">Is a copper-binding glycoprotein with ferroxidase activity. It oxidizes Fe(2+) to Fe(3+) without releasing radical oxygen species (PubMed:31125343). May be involved in the regulation of intracellular iron content (PubMed:31125343).</text>
</comment>
<comment type="catalytic activity">
    <reaction evidence="3">
        <text>4 Fe(2+) + O2 + 4 H(+) = 4 Fe(3+) + 2 H2O</text>
        <dbReference type="Rhea" id="RHEA:11148"/>
        <dbReference type="ChEBI" id="CHEBI:15377"/>
        <dbReference type="ChEBI" id="CHEBI:15378"/>
        <dbReference type="ChEBI" id="CHEBI:15379"/>
        <dbReference type="ChEBI" id="CHEBI:29033"/>
        <dbReference type="ChEBI" id="CHEBI:29034"/>
        <dbReference type="EC" id="1.16.3.1"/>
    </reaction>
</comment>
<comment type="cofactor">
    <cofactor evidence="3">
        <name>Cu cation</name>
        <dbReference type="ChEBI" id="CHEBI:23378"/>
    </cofactor>
    <text evidence="1">Binds 6 Cu cations per monomer.</text>
</comment>
<comment type="subcellular location">
    <subcellularLocation>
        <location evidence="4">Membrane</location>
        <topology evidence="4">Single-pass type I membrane protein</topology>
    </subcellularLocation>
</comment>
<comment type="disease" evidence="3">
    <disease id="DI-05602">
        <name>Abnormal hair, joint laxity, and developmental delay</name>
        <acronym>HJDD</acronym>
        <description>An autosomal recessive disease characterized by abnormal hair, cognitive delay, speech articulation disorder, and increased joint mobility. At birth patients have normal hair that gradually becomes sparse, twisted, brittle, and easily broken, with pili torti and trichorrhexis nodosa.</description>
        <dbReference type="MIM" id="261990"/>
    </disease>
    <text>The disease may be caused by variants affecting the gene represented in this entry.</text>
</comment>
<comment type="similarity">
    <text evidence="4">Belongs to the multicopper oxidase family.</text>
</comment>